<accession>A8ETF6</accession>
<evidence type="ECO:0000255" key="1">
    <source>
        <dbReference type="HAMAP-Rule" id="MF_00503"/>
    </source>
</evidence>
<evidence type="ECO:0000305" key="2"/>
<protein>
    <recommendedName>
        <fullName evidence="1">Large ribosomal subunit protein bL9</fullName>
    </recommendedName>
    <alternativeName>
        <fullName evidence="2">50S ribosomal protein L9</fullName>
    </alternativeName>
</protein>
<organism>
    <name type="scientific">Aliarcobacter butzleri (strain RM4018)</name>
    <name type="common">Arcobacter butzleri</name>
    <dbReference type="NCBI Taxonomy" id="367737"/>
    <lineage>
        <taxon>Bacteria</taxon>
        <taxon>Pseudomonadati</taxon>
        <taxon>Campylobacterota</taxon>
        <taxon>Epsilonproteobacteria</taxon>
        <taxon>Campylobacterales</taxon>
        <taxon>Arcobacteraceae</taxon>
        <taxon>Aliarcobacter</taxon>
    </lineage>
</organism>
<keyword id="KW-1185">Reference proteome</keyword>
<keyword id="KW-0687">Ribonucleoprotein</keyword>
<keyword id="KW-0689">Ribosomal protein</keyword>
<keyword id="KW-0694">RNA-binding</keyword>
<keyword id="KW-0699">rRNA-binding</keyword>
<gene>
    <name evidence="1" type="primary">rplI</name>
    <name type="ordered locus">Abu_0970</name>
</gene>
<dbReference type="EMBL" id="CP000361">
    <property type="protein sequence ID" value="ABV67230.1"/>
    <property type="molecule type" value="Genomic_DNA"/>
</dbReference>
<dbReference type="RefSeq" id="WP_012012692.1">
    <property type="nucleotide sequence ID" value="NC_009850.1"/>
</dbReference>
<dbReference type="SMR" id="A8ETF6"/>
<dbReference type="STRING" id="367737.Abu_0970"/>
<dbReference type="GeneID" id="24303926"/>
<dbReference type="KEGG" id="abu:Abu_0970"/>
<dbReference type="eggNOG" id="COG0359">
    <property type="taxonomic scope" value="Bacteria"/>
</dbReference>
<dbReference type="HOGENOM" id="CLU_078938_3_0_7"/>
<dbReference type="Proteomes" id="UP000001136">
    <property type="component" value="Chromosome"/>
</dbReference>
<dbReference type="GO" id="GO:1990904">
    <property type="term" value="C:ribonucleoprotein complex"/>
    <property type="evidence" value="ECO:0007669"/>
    <property type="project" value="UniProtKB-KW"/>
</dbReference>
<dbReference type="GO" id="GO:0005840">
    <property type="term" value="C:ribosome"/>
    <property type="evidence" value="ECO:0007669"/>
    <property type="project" value="UniProtKB-KW"/>
</dbReference>
<dbReference type="GO" id="GO:0019843">
    <property type="term" value="F:rRNA binding"/>
    <property type="evidence" value="ECO:0007669"/>
    <property type="project" value="UniProtKB-UniRule"/>
</dbReference>
<dbReference type="GO" id="GO:0003735">
    <property type="term" value="F:structural constituent of ribosome"/>
    <property type="evidence" value="ECO:0007669"/>
    <property type="project" value="InterPro"/>
</dbReference>
<dbReference type="GO" id="GO:0006412">
    <property type="term" value="P:translation"/>
    <property type="evidence" value="ECO:0007669"/>
    <property type="project" value="UniProtKB-UniRule"/>
</dbReference>
<dbReference type="Gene3D" id="3.10.430.100">
    <property type="entry name" value="Ribosomal protein L9, C-terminal domain"/>
    <property type="match status" value="1"/>
</dbReference>
<dbReference type="Gene3D" id="3.40.5.10">
    <property type="entry name" value="Ribosomal protein L9, N-terminal domain"/>
    <property type="match status" value="1"/>
</dbReference>
<dbReference type="HAMAP" id="MF_00503">
    <property type="entry name" value="Ribosomal_bL9"/>
    <property type="match status" value="1"/>
</dbReference>
<dbReference type="InterPro" id="IPR000244">
    <property type="entry name" value="Ribosomal_bL9"/>
</dbReference>
<dbReference type="InterPro" id="IPR009027">
    <property type="entry name" value="Ribosomal_bL9/RNase_H1_N"/>
</dbReference>
<dbReference type="InterPro" id="IPR020594">
    <property type="entry name" value="Ribosomal_bL9_bac/chp"/>
</dbReference>
<dbReference type="InterPro" id="IPR020069">
    <property type="entry name" value="Ribosomal_bL9_C"/>
</dbReference>
<dbReference type="InterPro" id="IPR036791">
    <property type="entry name" value="Ribosomal_bL9_C_sf"/>
</dbReference>
<dbReference type="InterPro" id="IPR020070">
    <property type="entry name" value="Ribosomal_bL9_N"/>
</dbReference>
<dbReference type="InterPro" id="IPR036935">
    <property type="entry name" value="Ribosomal_bL9_N_sf"/>
</dbReference>
<dbReference type="NCBIfam" id="TIGR00158">
    <property type="entry name" value="L9"/>
    <property type="match status" value="1"/>
</dbReference>
<dbReference type="PANTHER" id="PTHR21368">
    <property type="entry name" value="50S RIBOSOMAL PROTEIN L9"/>
    <property type="match status" value="1"/>
</dbReference>
<dbReference type="Pfam" id="PF03948">
    <property type="entry name" value="Ribosomal_L9_C"/>
    <property type="match status" value="1"/>
</dbReference>
<dbReference type="Pfam" id="PF01281">
    <property type="entry name" value="Ribosomal_L9_N"/>
    <property type="match status" value="1"/>
</dbReference>
<dbReference type="SUPFAM" id="SSF55658">
    <property type="entry name" value="L9 N-domain-like"/>
    <property type="match status" value="1"/>
</dbReference>
<dbReference type="SUPFAM" id="SSF55653">
    <property type="entry name" value="Ribosomal protein L9 C-domain"/>
    <property type="match status" value="1"/>
</dbReference>
<dbReference type="PROSITE" id="PS00651">
    <property type="entry name" value="RIBOSOMAL_L9"/>
    <property type="match status" value="1"/>
</dbReference>
<sequence length="148" mass="16190">MKVLLIKDVKSLGKAGEIKEVADGYGKNFLIGKGLALHATTDVLNKHKAEQKKLALKEEQEIAQAKELAEKLNATKLTIKHKVGANGHLIGSVTNKEVSDALEQQFSIMIDKKNIALDNKIKTIGIYEVDCKLGHSIHAKLKIDVIAE</sequence>
<comment type="function">
    <text evidence="1">Binds to the 23S rRNA.</text>
</comment>
<comment type="similarity">
    <text evidence="1">Belongs to the bacterial ribosomal protein bL9 family.</text>
</comment>
<proteinExistence type="inferred from homology"/>
<reference key="1">
    <citation type="journal article" date="2007" name="PLoS ONE">
        <title>The complete genome sequence and analysis of the Epsilonproteobacterium Arcobacter butzleri.</title>
        <authorList>
            <person name="Miller W.G."/>
            <person name="Parker C.T."/>
            <person name="Rubenfield M."/>
            <person name="Mendz G.L."/>
            <person name="Woesten M.M.S.M."/>
            <person name="Ussery D.W."/>
            <person name="Stolz J.F."/>
            <person name="Binnewies T.T."/>
            <person name="Hallin P.F."/>
            <person name="Wang G."/>
            <person name="Malek J.A."/>
            <person name="Rogosin A."/>
            <person name="Stanker L.H."/>
            <person name="Mandrell R.E."/>
        </authorList>
    </citation>
    <scope>NUCLEOTIDE SEQUENCE [LARGE SCALE GENOMIC DNA]</scope>
    <source>
        <strain>RM4018</strain>
    </source>
</reference>
<name>RL9_ALIB4</name>
<feature type="chain" id="PRO_1000060504" description="Large ribosomal subunit protein bL9">
    <location>
        <begin position="1"/>
        <end position="148"/>
    </location>
</feature>